<proteinExistence type="inferred from homology"/>
<dbReference type="EMBL" id="CP000076">
    <property type="protein sequence ID" value="AAY96242.1"/>
    <property type="molecule type" value="Genomic_DNA"/>
</dbReference>
<dbReference type="RefSeq" id="WP_011059202.1">
    <property type="nucleotide sequence ID" value="NC_004129.6"/>
</dbReference>
<dbReference type="SMR" id="Q4KIF6"/>
<dbReference type="STRING" id="220664.PFL_0844"/>
<dbReference type="GeneID" id="57473845"/>
<dbReference type="KEGG" id="pfl:PFL_0844"/>
<dbReference type="PATRIC" id="fig|220664.5.peg.864"/>
<dbReference type="eggNOG" id="COG0532">
    <property type="taxonomic scope" value="Bacteria"/>
</dbReference>
<dbReference type="HOGENOM" id="CLU_006301_6_3_6"/>
<dbReference type="Proteomes" id="UP000008540">
    <property type="component" value="Chromosome"/>
</dbReference>
<dbReference type="GO" id="GO:0005829">
    <property type="term" value="C:cytosol"/>
    <property type="evidence" value="ECO:0007669"/>
    <property type="project" value="TreeGrafter"/>
</dbReference>
<dbReference type="GO" id="GO:0005525">
    <property type="term" value="F:GTP binding"/>
    <property type="evidence" value="ECO:0007669"/>
    <property type="project" value="UniProtKB-KW"/>
</dbReference>
<dbReference type="GO" id="GO:0003924">
    <property type="term" value="F:GTPase activity"/>
    <property type="evidence" value="ECO:0007669"/>
    <property type="project" value="UniProtKB-UniRule"/>
</dbReference>
<dbReference type="GO" id="GO:0003743">
    <property type="term" value="F:translation initiation factor activity"/>
    <property type="evidence" value="ECO:0007669"/>
    <property type="project" value="UniProtKB-UniRule"/>
</dbReference>
<dbReference type="CDD" id="cd01887">
    <property type="entry name" value="IF2_eIF5B"/>
    <property type="match status" value="1"/>
</dbReference>
<dbReference type="CDD" id="cd03702">
    <property type="entry name" value="IF2_mtIF2_II"/>
    <property type="match status" value="1"/>
</dbReference>
<dbReference type="CDD" id="cd03692">
    <property type="entry name" value="mtIF2_IVc"/>
    <property type="match status" value="1"/>
</dbReference>
<dbReference type="FunFam" id="2.40.30.10:FF:000007">
    <property type="entry name" value="Translation initiation factor IF-2"/>
    <property type="match status" value="1"/>
</dbReference>
<dbReference type="FunFam" id="2.40.30.10:FF:000008">
    <property type="entry name" value="Translation initiation factor IF-2"/>
    <property type="match status" value="1"/>
</dbReference>
<dbReference type="FunFam" id="3.40.50.10050:FF:000001">
    <property type="entry name" value="Translation initiation factor IF-2"/>
    <property type="match status" value="1"/>
</dbReference>
<dbReference type="FunFam" id="3.40.50.300:FF:000019">
    <property type="entry name" value="Translation initiation factor IF-2"/>
    <property type="match status" value="1"/>
</dbReference>
<dbReference type="Gene3D" id="3.40.50.300">
    <property type="entry name" value="P-loop containing nucleotide triphosphate hydrolases"/>
    <property type="match status" value="1"/>
</dbReference>
<dbReference type="Gene3D" id="3.30.56.50">
    <property type="entry name" value="Putative DNA-binding domain, N-terminal subdomain of bacterial translation initiation factor IF2"/>
    <property type="match status" value="1"/>
</dbReference>
<dbReference type="Gene3D" id="2.40.30.10">
    <property type="entry name" value="Translation factors"/>
    <property type="match status" value="2"/>
</dbReference>
<dbReference type="Gene3D" id="3.40.50.10050">
    <property type="entry name" value="Translation initiation factor IF- 2, domain 3"/>
    <property type="match status" value="1"/>
</dbReference>
<dbReference type="HAMAP" id="MF_00100_B">
    <property type="entry name" value="IF_2_B"/>
    <property type="match status" value="1"/>
</dbReference>
<dbReference type="InterPro" id="IPR009061">
    <property type="entry name" value="DNA-bd_dom_put_sf"/>
</dbReference>
<dbReference type="InterPro" id="IPR053905">
    <property type="entry name" value="EF-G-like_DII"/>
</dbReference>
<dbReference type="InterPro" id="IPR013575">
    <property type="entry name" value="IF2_assoc_dom_bac"/>
</dbReference>
<dbReference type="InterPro" id="IPR044145">
    <property type="entry name" value="IF2_II"/>
</dbReference>
<dbReference type="InterPro" id="IPR006847">
    <property type="entry name" value="IF2_N"/>
</dbReference>
<dbReference type="InterPro" id="IPR027417">
    <property type="entry name" value="P-loop_NTPase"/>
</dbReference>
<dbReference type="InterPro" id="IPR005225">
    <property type="entry name" value="Small_GTP-bd"/>
</dbReference>
<dbReference type="InterPro" id="IPR000795">
    <property type="entry name" value="T_Tr_GTP-bd_dom"/>
</dbReference>
<dbReference type="InterPro" id="IPR000178">
    <property type="entry name" value="TF_IF2_bacterial-like"/>
</dbReference>
<dbReference type="InterPro" id="IPR015760">
    <property type="entry name" value="TIF_IF2"/>
</dbReference>
<dbReference type="InterPro" id="IPR023115">
    <property type="entry name" value="TIF_IF2_dom3"/>
</dbReference>
<dbReference type="InterPro" id="IPR036925">
    <property type="entry name" value="TIF_IF2_dom3_sf"/>
</dbReference>
<dbReference type="InterPro" id="IPR009000">
    <property type="entry name" value="Transl_B-barrel_sf"/>
</dbReference>
<dbReference type="NCBIfam" id="TIGR00487">
    <property type="entry name" value="IF-2"/>
    <property type="match status" value="1"/>
</dbReference>
<dbReference type="NCBIfam" id="TIGR00231">
    <property type="entry name" value="small_GTP"/>
    <property type="match status" value="1"/>
</dbReference>
<dbReference type="PANTHER" id="PTHR43381:SF5">
    <property type="entry name" value="TR-TYPE G DOMAIN-CONTAINING PROTEIN"/>
    <property type="match status" value="1"/>
</dbReference>
<dbReference type="PANTHER" id="PTHR43381">
    <property type="entry name" value="TRANSLATION INITIATION FACTOR IF-2-RELATED"/>
    <property type="match status" value="1"/>
</dbReference>
<dbReference type="Pfam" id="PF22042">
    <property type="entry name" value="EF-G_D2"/>
    <property type="match status" value="1"/>
</dbReference>
<dbReference type="Pfam" id="PF00009">
    <property type="entry name" value="GTP_EFTU"/>
    <property type="match status" value="1"/>
</dbReference>
<dbReference type="Pfam" id="PF11987">
    <property type="entry name" value="IF-2"/>
    <property type="match status" value="1"/>
</dbReference>
<dbReference type="Pfam" id="PF08364">
    <property type="entry name" value="IF2_assoc"/>
    <property type="match status" value="1"/>
</dbReference>
<dbReference type="Pfam" id="PF04760">
    <property type="entry name" value="IF2_N"/>
    <property type="match status" value="2"/>
</dbReference>
<dbReference type="SUPFAM" id="SSF52156">
    <property type="entry name" value="Initiation factor IF2/eIF5b, domain 3"/>
    <property type="match status" value="1"/>
</dbReference>
<dbReference type="SUPFAM" id="SSF52540">
    <property type="entry name" value="P-loop containing nucleoside triphosphate hydrolases"/>
    <property type="match status" value="1"/>
</dbReference>
<dbReference type="SUPFAM" id="SSF46955">
    <property type="entry name" value="Putative DNA-binding domain"/>
    <property type="match status" value="1"/>
</dbReference>
<dbReference type="SUPFAM" id="SSF50447">
    <property type="entry name" value="Translation proteins"/>
    <property type="match status" value="2"/>
</dbReference>
<dbReference type="PROSITE" id="PS51722">
    <property type="entry name" value="G_TR_2"/>
    <property type="match status" value="1"/>
</dbReference>
<dbReference type="PROSITE" id="PS01176">
    <property type="entry name" value="IF2"/>
    <property type="match status" value="1"/>
</dbReference>
<sequence length="838" mass="90500">MTQVTVKQLADEVKTPVERLLQQMREAGLPHTAAEEHVSDSEKQSLLTHLKSSHKAKVEEPRKITLQRKTTSTLRVAGSKSISVEVRKKKVFVQRSPEEIEAERQRELEERRAVENAARQKAEEEAKRRAEEEARRQPAPVAEPVAAQAAAPAPAPVVEPVQEAPVATAAPAADARKKDEQRRPDKTRNDDNRRGGDGERKNAPHRASVKEKAPAPRVAPRTTDEESDGFRRGGRGKAKLKKRNAHGFQSPTGPVVRDVQIGETITVGELAQQMSVKAAEVIKFMFKLGTPATINQVLDQETAQLVAEELGHKVTLVSDTALEDSLAESLKFEGEAVARAPVVTVMGHVDHGKTSLLDYIRRAKVAAGEAGGITQHIGAYHVETERGMVTFLDTPGHAAFTAMRARGAKATDIVILVVAADDGVMPQTVEAVQHAQAAGVPLVVAVNKIDKPGADLDRIRSELSVHGVTSEDWGGDTPFVPVSAKMGTGVDDLLEAVLLQAEVLELKATPSAPGRGVVVESRLDKGRGPVATVLVQDGTLRQGDMVLVGSNYGRVRAMLDENGKPIKEAGPSIPVEILGLDGTPDAGDEMSVVADEKKAREVALFRQGKFREVKLARAHAGKLENIFESMGQEEKKTLNIVLKSDVRGSLEALQGALNGLGNDEVQVRVVGGGVGGITESDANLALASNAVLFGFNVRADAGARKIVEQEGLDMRYYNVIYDIIEDVKKALTGMLGSDVRENILGVAEVRDVFRSPKFGAIAGCMVIEGVVHRNRPIRVLREDIVIFEGELESLRRFKDDASEVRAGMECGIGVKSYNDVKVGDKIEVFEKVQVARSL</sequence>
<comment type="function">
    <text evidence="2">One of the essential components for the initiation of protein synthesis. Protects formylmethionyl-tRNA from spontaneous hydrolysis and promotes its binding to the 30S ribosomal subunits. Also involved in the hydrolysis of GTP during the formation of the 70S ribosomal complex.</text>
</comment>
<comment type="subcellular location">
    <subcellularLocation>
        <location evidence="2">Cytoplasm</location>
    </subcellularLocation>
</comment>
<comment type="similarity">
    <text evidence="2">Belongs to the TRAFAC class translation factor GTPase superfamily. Classic translation factor GTPase family. IF-2 subfamily.</text>
</comment>
<keyword id="KW-0963">Cytoplasm</keyword>
<keyword id="KW-0342">GTP-binding</keyword>
<keyword id="KW-0396">Initiation factor</keyword>
<keyword id="KW-0547">Nucleotide-binding</keyword>
<keyword id="KW-0648">Protein biosynthesis</keyword>
<name>IF2_PSEF5</name>
<evidence type="ECO:0000250" key="1"/>
<evidence type="ECO:0000255" key="2">
    <source>
        <dbReference type="HAMAP-Rule" id="MF_00100"/>
    </source>
</evidence>
<evidence type="ECO:0000256" key="3">
    <source>
        <dbReference type="SAM" id="MobiDB-lite"/>
    </source>
</evidence>
<reference key="1">
    <citation type="journal article" date="2005" name="Nat. Biotechnol.">
        <title>Complete genome sequence of the plant commensal Pseudomonas fluorescens Pf-5.</title>
        <authorList>
            <person name="Paulsen I.T."/>
            <person name="Press C.M."/>
            <person name="Ravel J."/>
            <person name="Kobayashi D.Y."/>
            <person name="Myers G.S.A."/>
            <person name="Mavrodi D.V."/>
            <person name="DeBoy R.T."/>
            <person name="Seshadri R."/>
            <person name="Ren Q."/>
            <person name="Madupu R."/>
            <person name="Dodson R.J."/>
            <person name="Durkin A.S."/>
            <person name="Brinkac L.M."/>
            <person name="Daugherty S.C."/>
            <person name="Sullivan S.A."/>
            <person name="Rosovitz M.J."/>
            <person name="Gwinn M.L."/>
            <person name="Zhou L."/>
            <person name="Schneider D.J."/>
            <person name="Cartinhour S.W."/>
            <person name="Nelson W.C."/>
            <person name="Weidman J."/>
            <person name="Watkins K."/>
            <person name="Tran K."/>
            <person name="Khouri H."/>
            <person name="Pierson E.A."/>
            <person name="Pierson L.S. III"/>
            <person name="Thomashow L.S."/>
            <person name="Loper J.E."/>
        </authorList>
    </citation>
    <scope>NUCLEOTIDE SEQUENCE [LARGE SCALE GENOMIC DNA]</scope>
    <source>
        <strain>ATCC BAA-477 / NRRL B-23932 / Pf-5</strain>
    </source>
</reference>
<feature type="chain" id="PRO_0000228229" description="Translation initiation factor IF-2">
    <location>
        <begin position="1"/>
        <end position="838"/>
    </location>
</feature>
<feature type="domain" description="tr-type G">
    <location>
        <begin position="338"/>
        <end position="507"/>
    </location>
</feature>
<feature type="region of interest" description="Disordered" evidence="3">
    <location>
        <begin position="30"/>
        <end position="60"/>
    </location>
</feature>
<feature type="region of interest" description="Disordered" evidence="3">
    <location>
        <begin position="94"/>
        <end position="254"/>
    </location>
</feature>
<feature type="region of interest" description="G1" evidence="1">
    <location>
        <begin position="347"/>
        <end position="354"/>
    </location>
</feature>
<feature type="region of interest" description="G2" evidence="1">
    <location>
        <begin position="372"/>
        <end position="376"/>
    </location>
</feature>
<feature type="region of interest" description="G3" evidence="1">
    <location>
        <begin position="393"/>
        <end position="396"/>
    </location>
</feature>
<feature type="region of interest" description="G4" evidence="1">
    <location>
        <begin position="447"/>
        <end position="450"/>
    </location>
</feature>
<feature type="region of interest" description="G5" evidence="1">
    <location>
        <begin position="483"/>
        <end position="485"/>
    </location>
</feature>
<feature type="compositionally biased region" description="Basic and acidic residues" evidence="3">
    <location>
        <begin position="33"/>
        <end position="43"/>
    </location>
</feature>
<feature type="compositionally biased region" description="Basic and acidic residues" evidence="3">
    <location>
        <begin position="96"/>
        <end position="136"/>
    </location>
</feature>
<feature type="compositionally biased region" description="Low complexity" evidence="3">
    <location>
        <begin position="137"/>
        <end position="173"/>
    </location>
</feature>
<feature type="compositionally biased region" description="Basic and acidic residues" evidence="3">
    <location>
        <begin position="174"/>
        <end position="214"/>
    </location>
</feature>
<feature type="compositionally biased region" description="Basic and acidic residues" evidence="3">
    <location>
        <begin position="222"/>
        <end position="231"/>
    </location>
</feature>
<feature type="compositionally biased region" description="Basic residues" evidence="3">
    <location>
        <begin position="232"/>
        <end position="245"/>
    </location>
</feature>
<feature type="binding site" evidence="2">
    <location>
        <begin position="347"/>
        <end position="354"/>
    </location>
    <ligand>
        <name>GTP</name>
        <dbReference type="ChEBI" id="CHEBI:37565"/>
    </ligand>
</feature>
<feature type="binding site" evidence="2">
    <location>
        <begin position="393"/>
        <end position="397"/>
    </location>
    <ligand>
        <name>GTP</name>
        <dbReference type="ChEBI" id="CHEBI:37565"/>
    </ligand>
</feature>
<feature type="binding site" evidence="2">
    <location>
        <begin position="447"/>
        <end position="450"/>
    </location>
    <ligand>
        <name>GTP</name>
        <dbReference type="ChEBI" id="CHEBI:37565"/>
    </ligand>
</feature>
<gene>
    <name evidence="2" type="primary">infB</name>
    <name type="ordered locus">PFL_0844</name>
</gene>
<protein>
    <recommendedName>
        <fullName evidence="2">Translation initiation factor IF-2</fullName>
    </recommendedName>
</protein>
<organism>
    <name type="scientific">Pseudomonas fluorescens (strain ATCC BAA-477 / NRRL B-23932 / Pf-5)</name>
    <dbReference type="NCBI Taxonomy" id="220664"/>
    <lineage>
        <taxon>Bacteria</taxon>
        <taxon>Pseudomonadati</taxon>
        <taxon>Pseudomonadota</taxon>
        <taxon>Gammaproteobacteria</taxon>
        <taxon>Pseudomonadales</taxon>
        <taxon>Pseudomonadaceae</taxon>
        <taxon>Pseudomonas</taxon>
    </lineage>
</organism>
<accession>Q4KIF6</accession>